<protein>
    <recommendedName>
        <fullName evidence="1">Type III pantothenate kinase</fullName>
        <ecNumber evidence="1">2.7.1.33</ecNumber>
    </recommendedName>
    <alternativeName>
        <fullName evidence="1">PanK-III</fullName>
    </alternativeName>
    <alternativeName>
        <fullName evidence="1">Pantothenic acid kinase</fullName>
    </alternativeName>
</protein>
<gene>
    <name evidence="1" type="primary">coaX</name>
    <name type="ordered locus">BMA0070</name>
</gene>
<proteinExistence type="inferred from homology"/>
<sequence length="256" mass="26831">MCLLIDAGNSRIKWALADTARHFVTSGAFEHASDAPDWSTLPVPRGAWISNVAGDAAAARIDALIEARWPALPRTVVRASAAQCGVTNGYAEPARLGSDRWAGLIGAHAAFADEHLLIATFGTATTLEALRADGHFAGGLIAPGWALMMRSLGMHTAQLPTVSIDAATNLLDELAENDAHAPFAIDTPHALSAGCLQAQAGLIERAWRDLEKAWQAPVRLVLSGGAADAIVRALTVPHTRHDTLVLTGLALIAHSA</sequence>
<organism>
    <name type="scientific">Burkholderia mallei (strain ATCC 23344)</name>
    <dbReference type="NCBI Taxonomy" id="243160"/>
    <lineage>
        <taxon>Bacteria</taxon>
        <taxon>Pseudomonadati</taxon>
        <taxon>Pseudomonadota</taxon>
        <taxon>Betaproteobacteria</taxon>
        <taxon>Burkholderiales</taxon>
        <taxon>Burkholderiaceae</taxon>
        <taxon>Burkholderia</taxon>
        <taxon>pseudomallei group</taxon>
    </lineage>
</organism>
<comment type="function">
    <text evidence="1">Catalyzes the phosphorylation of pantothenate (Pan), the first step in CoA biosynthesis.</text>
</comment>
<comment type="catalytic activity">
    <reaction evidence="1">
        <text>(R)-pantothenate + ATP = (R)-4'-phosphopantothenate + ADP + H(+)</text>
        <dbReference type="Rhea" id="RHEA:16373"/>
        <dbReference type="ChEBI" id="CHEBI:10986"/>
        <dbReference type="ChEBI" id="CHEBI:15378"/>
        <dbReference type="ChEBI" id="CHEBI:29032"/>
        <dbReference type="ChEBI" id="CHEBI:30616"/>
        <dbReference type="ChEBI" id="CHEBI:456216"/>
        <dbReference type="EC" id="2.7.1.33"/>
    </reaction>
</comment>
<comment type="cofactor">
    <cofactor evidence="1">
        <name>NH4(+)</name>
        <dbReference type="ChEBI" id="CHEBI:28938"/>
    </cofactor>
    <cofactor evidence="1">
        <name>K(+)</name>
        <dbReference type="ChEBI" id="CHEBI:29103"/>
    </cofactor>
    <text evidence="1">A monovalent cation. Ammonium or potassium.</text>
</comment>
<comment type="pathway">
    <text evidence="1">Cofactor biosynthesis; coenzyme A biosynthesis; CoA from (R)-pantothenate: step 1/5.</text>
</comment>
<comment type="subunit">
    <text evidence="1">Homodimer.</text>
</comment>
<comment type="subcellular location">
    <subcellularLocation>
        <location evidence="1">Cytoplasm</location>
    </subcellularLocation>
</comment>
<comment type="similarity">
    <text evidence="1">Belongs to the type III pantothenate kinase family.</text>
</comment>
<evidence type="ECO:0000255" key="1">
    <source>
        <dbReference type="HAMAP-Rule" id="MF_01274"/>
    </source>
</evidence>
<reference key="1">
    <citation type="journal article" date="2004" name="Proc. Natl. Acad. Sci. U.S.A.">
        <title>Structural flexibility in the Burkholderia mallei genome.</title>
        <authorList>
            <person name="Nierman W.C."/>
            <person name="DeShazer D."/>
            <person name="Kim H.S."/>
            <person name="Tettelin H."/>
            <person name="Nelson K.E."/>
            <person name="Feldblyum T.V."/>
            <person name="Ulrich R.L."/>
            <person name="Ronning C.M."/>
            <person name="Brinkac L.M."/>
            <person name="Daugherty S.C."/>
            <person name="Davidsen T.D."/>
            <person name="DeBoy R.T."/>
            <person name="Dimitrov G."/>
            <person name="Dodson R.J."/>
            <person name="Durkin A.S."/>
            <person name="Gwinn M.L."/>
            <person name="Haft D.H."/>
            <person name="Khouri H.M."/>
            <person name="Kolonay J.F."/>
            <person name="Madupu R."/>
            <person name="Mohammoud Y."/>
            <person name="Nelson W.C."/>
            <person name="Radune D."/>
            <person name="Romero C.M."/>
            <person name="Sarria S."/>
            <person name="Selengut J."/>
            <person name="Shamblin C."/>
            <person name="Sullivan S.A."/>
            <person name="White O."/>
            <person name="Yu Y."/>
            <person name="Zafar N."/>
            <person name="Zhou L."/>
            <person name="Fraser C.M."/>
        </authorList>
    </citation>
    <scope>NUCLEOTIDE SEQUENCE [LARGE SCALE GENOMIC DNA]</scope>
    <source>
        <strain>ATCC 23344</strain>
    </source>
</reference>
<accession>Q62MZ8</accession>
<keyword id="KW-0067">ATP-binding</keyword>
<keyword id="KW-0173">Coenzyme A biosynthesis</keyword>
<keyword id="KW-0963">Cytoplasm</keyword>
<keyword id="KW-0418">Kinase</keyword>
<keyword id="KW-0547">Nucleotide-binding</keyword>
<keyword id="KW-0630">Potassium</keyword>
<keyword id="KW-1185">Reference proteome</keyword>
<keyword id="KW-0808">Transferase</keyword>
<feature type="chain" id="PRO_0000270866" description="Type III pantothenate kinase">
    <location>
        <begin position="1"/>
        <end position="256"/>
    </location>
</feature>
<feature type="active site" description="Proton acceptor" evidence="1">
    <location>
        <position position="99"/>
    </location>
</feature>
<feature type="binding site" evidence="1">
    <location>
        <begin position="6"/>
        <end position="13"/>
    </location>
    <ligand>
        <name>ATP</name>
        <dbReference type="ChEBI" id="CHEBI:30616"/>
    </ligand>
</feature>
<feature type="binding site" evidence="1">
    <location>
        <position position="90"/>
    </location>
    <ligand>
        <name>substrate</name>
    </ligand>
</feature>
<feature type="binding site" evidence="1">
    <location>
        <begin position="97"/>
        <end position="100"/>
    </location>
    <ligand>
        <name>substrate</name>
    </ligand>
</feature>
<feature type="binding site" evidence="1">
    <location>
        <position position="123"/>
    </location>
    <ligand>
        <name>ATP</name>
        <dbReference type="ChEBI" id="CHEBI:30616"/>
    </ligand>
</feature>
<feature type="binding site" evidence="1">
    <location>
        <position position="187"/>
    </location>
    <ligand>
        <name>substrate</name>
    </ligand>
</feature>
<name>COAX_BURMA</name>
<dbReference type="EC" id="2.7.1.33" evidence="1"/>
<dbReference type="EMBL" id="CP000010">
    <property type="protein sequence ID" value="AAU48629.1"/>
    <property type="molecule type" value="Genomic_DNA"/>
</dbReference>
<dbReference type="RefSeq" id="WP_004196311.1">
    <property type="nucleotide sequence ID" value="NC_006348.1"/>
</dbReference>
<dbReference type="RefSeq" id="YP_101919.1">
    <property type="nucleotide sequence ID" value="NC_006348.1"/>
</dbReference>
<dbReference type="SMR" id="Q62MZ8"/>
<dbReference type="GeneID" id="92977851"/>
<dbReference type="KEGG" id="bma:BMA0070"/>
<dbReference type="PATRIC" id="fig|243160.12.peg.64"/>
<dbReference type="eggNOG" id="COG1521">
    <property type="taxonomic scope" value="Bacteria"/>
</dbReference>
<dbReference type="HOGENOM" id="CLU_066627_0_0_4"/>
<dbReference type="UniPathway" id="UPA00241">
    <property type="reaction ID" value="UER00352"/>
</dbReference>
<dbReference type="Proteomes" id="UP000006693">
    <property type="component" value="Chromosome 1"/>
</dbReference>
<dbReference type="GO" id="GO:0005737">
    <property type="term" value="C:cytoplasm"/>
    <property type="evidence" value="ECO:0007669"/>
    <property type="project" value="UniProtKB-SubCell"/>
</dbReference>
<dbReference type="GO" id="GO:0005524">
    <property type="term" value="F:ATP binding"/>
    <property type="evidence" value="ECO:0007669"/>
    <property type="project" value="UniProtKB-UniRule"/>
</dbReference>
<dbReference type="GO" id="GO:0004594">
    <property type="term" value="F:pantothenate kinase activity"/>
    <property type="evidence" value="ECO:0007669"/>
    <property type="project" value="UniProtKB-UniRule"/>
</dbReference>
<dbReference type="GO" id="GO:0015937">
    <property type="term" value="P:coenzyme A biosynthetic process"/>
    <property type="evidence" value="ECO:0007669"/>
    <property type="project" value="UniProtKB-UniRule"/>
</dbReference>
<dbReference type="CDD" id="cd24015">
    <property type="entry name" value="ASKHA_NBD_PanK-III"/>
    <property type="match status" value="1"/>
</dbReference>
<dbReference type="Gene3D" id="3.30.420.40">
    <property type="match status" value="2"/>
</dbReference>
<dbReference type="HAMAP" id="MF_01274">
    <property type="entry name" value="Pantothen_kinase_3"/>
    <property type="match status" value="1"/>
</dbReference>
<dbReference type="InterPro" id="IPR043129">
    <property type="entry name" value="ATPase_NBD"/>
</dbReference>
<dbReference type="InterPro" id="IPR004619">
    <property type="entry name" value="Type_III_PanK"/>
</dbReference>
<dbReference type="NCBIfam" id="TIGR00671">
    <property type="entry name" value="baf"/>
    <property type="match status" value="1"/>
</dbReference>
<dbReference type="NCBIfam" id="NF009865">
    <property type="entry name" value="PRK13328.1-1"/>
    <property type="match status" value="1"/>
</dbReference>
<dbReference type="NCBIfam" id="NF009868">
    <property type="entry name" value="PRK13328.1-4"/>
    <property type="match status" value="1"/>
</dbReference>
<dbReference type="PANTHER" id="PTHR34265">
    <property type="entry name" value="TYPE III PANTOTHENATE KINASE"/>
    <property type="match status" value="1"/>
</dbReference>
<dbReference type="PANTHER" id="PTHR34265:SF1">
    <property type="entry name" value="TYPE III PANTOTHENATE KINASE"/>
    <property type="match status" value="1"/>
</dbReference>
<dbReference type="Pfam" id="PF03309">
    <property type="entry name" value="Pan_kinase"/>
    <property type="match status" value="1"/>
</dbReference>
<dbReference type="SUPFAM" id="SSF53067">
    <property type="entry name" value="Actin-like ATPase domain"/>
    <property type="match status" value="2"/>
</dbReference>